<comment type="cofactor">
    <cofactor evidence="1">
        <name>Zn(2+)</name>
        <dbReference type="ChEBI" id="CHEBI:29105"/>
    </cofactor>
    <text evidence="1">Binds 1 zinc ion.</text>
</comment>
<comment type="subcellular location">
    <subcellularLocation>
        <location evidence="1">Cytoplasm</location>
    </subcellularLocation>
</comment>
<comment type="similarity">
    <text evidence="1">Belongs to the SprT family.</text>
</comment>
<keyword id="KW-0963">Cytoplasm</keyword>
<keyword id="KW-0479">Metal-binding</keyword>
<keyword id="KW-0862">Zinc</keyword>
<sequence>MKTPRLPIAIQQAVMRRLRENLAQANLKLDRHYPEPKLVYTQRGTSAGTAWLESYEIRLNPVLLLENIDTFIAEVVPHELAHLLVWKHFGRKAPHGKEWKWMMESVLGVPARRTHQFALQSVRRNTFPYHCQCQQHQLTVRRHNRVVRGEAVYRCVHCGEPLVAG</sequence>
<name>SPRT_SALDC</name>
<evidence type="ECO:0000255" key="1">
    <source>
        <dbReference type="HAMAP-Rule" id="MF_00746"/>
    </source>
</evidence>
<feature type="chain" id="PRO_1000133249" description="Protein SprT">
    <location>
        <begin position="1"/>
        <end position="165"/>
    </location>
</feature>
<feature type="domain" description="SprT-like" evidence="1">
    <location>
        <begin position="22"/>
        <end position="163"/>
    </location>
</feature>
<feature type="active site" evidence="1">
    <location>
        <position position="79"/>
    </location>
</feature>
<feature type="binding site" evidence="1">
    <location>
        <position position="78"/>
    </location>
    <ligand>
        <name>Zn(2+)</name>
        <dbReference type="ChEBI" id="CHEBI:29105"/>
    </ligand>
</feature>
<feature type="binding site" evidence="1">
    <location>
        <position position="82"/>
    </location>
    <ligand>
        <name>Zn(2+)</name>
        <dbReference type="ChEBI" id="CHEBI:29105"/>
    </ligand>
</feature>
<organism>
    <name type="scientific">Salmonella dublin (strain CT_02021853)</name>
    <dbReference type="NCBI Taxonomy" id="439851"/>
    <lineage>
        <taxon>Bacteria</taxon>
        <taxon>Pseudomonadati</taxon>
        <taxon>Pseudomonadota</taxon>
        <taxon>Gammaproteobacteria</taxon>
        <taxon>Enterobacterales</taxon>
        <taxon>Enterobacteriaceae</taxon>
        <taxon>Salmonella</taxon>
    </lineage>
</organism>
<accession>B5FUV5</accession>
<proteinExistence type="inferred from homology"/>
<protein>
    <recommendedName>
        <fullName evidence="1">Protein SprT</fullName>
    </recommendedName>
</protein>
<gene>
    <name evidence="1" type="primary">sprT</name>
    <name type="ordered locus">SeD_A3435</name>
</gene>
<dbReference type="EMBL" id="CP001144">
    <property type="protein sequence ID" value="ACH73827.1"/>
    <property type="molecule type" value="Genomic_DNA"/>
</dbReference>
<dbReference type="RefSeq" id="WP_000856775.1">
    <property type="nucleotide sequence ID" value="NC_011205.1"/>
</dbReference>
<dbReference type="KEGG" id="sed:SeD_A3435"/>
<dbReference type="HOGENOM" id="CLU_113336_0_1_6"/>
<dbReference type="Proteomes" id="UP000008322">
    <property type="component" value="Chromosome"/>
</dbReference>
<dbReference type="GO" id="GO:0005737">
    <property type="term" value="C:cytoplasm"/>
    <property type="evidence" value="ECO:0007669"/>
    <property type="project" value="UniProtKB-SubCell"/>
</dbReference>
<dbReference type="GO" id="GO:0008270">
    <property type="term" value="F:zinc ion binding"/>
    <property type="evidence" value="ECO:0007669"/>
    <property type="project" value="UniProtKB-UniRule"/>
</dbReference>
<dbReference type="GO" id="GO:0006950">
    <property type="term" value="P:response to stress"/>
    <property type="evidence" value="ECO:0007669"/>
    <property type="project" value="UniProtKB-ARBA"/>
</dbReference>
<dbReference type="HAMAP" id="MF_00746">
    <property type="entry name" value="SprT"/>
    <property type="match status" value="1"/>
</dbReference>
<dbReference type="InterPro" id="IPR006640">
    <property type="entry name" value="SprT-like_domain"/>
</dbReference>
<dbReference type="InterPro" id="IPR035240">
    <property type="entry name" value="SprT_Zn_ribbon"/>
</dbReference>
<dbReference type="InterPro" id="IPR023483">
    <property type="entry name" value="Uncharacterised_SprT"/>
</dbReference>
<dbReference type="NCBIfam" id="NF003421">
    <property type="entry name" value="PRK04860.1"/>
    <property type="match status" value="1"/>
</dbReference>
<dbReference type="PANTHER" id="PTHR38773">
    <property type="entry name" value="PROTEIN SPRT"/>
    <property type="match status" value="1"/>
</dbReference>
<dbReference type="PANTHER" id="PTHR38773:SF1">
    <property type="entry name" value="PROTEIN SPRT"/>
    <property type="match status" value="1"/>
</dbReference>
<dbReference type="Pfam" id="PF10263">
    <property type="entry name" value="SprT-like"/>
    <property type="match status" value="1"/>
</dbReference>
<dbReference type="Pfam" id="PF17283">
    <property type="entry name" value="Zn_ribbon_SprT"/>
    <property type="match status" value="1"/>
</dbReference>
<dbReference type="SMART" id="SM00731">
    <property type="entry name" value="SprT"/>
    <property type="match status" value="1"/>
</dbReference>
<dbReference type="PROSITE" id="PS00142">
    <property type="entry name" value="ZINC_PROTEASE"/>
    <property type="match status" value="1"/>
</dbReference>
<reference key="1">
    <citation type="journal article" date="2011" name="J. Bacteriol.">
        <title>Comparative genomics of 28 Salmonella enterica isolates: evidence for CRISPR-mediated adaptive sublineage evolution.</title>
        <authorList>
            <person name="Fricke W.F."/>
            <person name="Mammel M.K."/>
            <person name="McDermott P.F."/>
            <person name="Tartera C."/>
            <person name="White D.G."/>
            <person name="Leclerc J.E."/>
            <person name="Ravel J."/>
            <person name="Cebula T.A."/>
        </authorList>
    </citation>
    <scope>NUCLEOTIDE SEQUENCE [LARGE SCALE GENOMIC DNA]</scope>
    <source>
        <strain>CT_02021853</strain>
    </source>
</reference>